<organism>
    <name type="scientific">Cavia porcellus</name>
    <name type="common">Guinea pig</name>
    <dbReference type="NCBI Taxonomy" id="10141"/>
    <lineage>
        <taxon>Eukaryota</taxon>
        <taxon>Metazoa</taxon>
        <taxon>Chordata</taxon>
        <taxon>Craniata</taxon>
        <taxon>Vertebrata</taxon>
        <taxon>Euteleostomi</taxon>
        <taxon>Mammalia</taxon>
        <taxon>Eutheria</taxon>
        <taxon>Euarchontoglires</taxon>
        <taxon>Glires</taxon>
        <taxon>Rodentia</taxon>
        <taxon>Hystricomorpha</taxon>
        <taxon>Caviidae</taxon>
        <taxon>Cavia</taxon>
    </lineage>
</organism>
<name>NGF_CAVPO</name>
<comment type="function">
    <text evidence="1">Nerve growth factor is important for the development and maintenance of the sympathetic and sensory nervous systems. Extracellular ligand for the NTRK1 and NGFR receptors, activates cellular signaling cascades through those receptor tyrosine kinase to regulate neuronal proliferation, differentiation and survival. Inhibits metalloproteinase dependent proteolysis of platelet glycoprotein VI.</text>
</comment>
<comment type="subunit">
    <text evidence="1 2">Homodimer. The homodimer interacts with a single NTRK1 chain. The homodimer interacts with a single NGFR chain (By similarity). The NGF dimer interacts with a single SORCS2 chain (via extracellular domain). The NGF precursor (proNGF) binds to a receptor complex formed by SORT1 and NGFR, which leads to NGF endocytosis. Both mature NGF and the immature NGF precursor (proNGF) interact with SORCS2 and with the heterodimer formed by SORCS2 and NGFR (via extracellular domains). The NGF precursor (proNGF) has much higher affinity for SORCS2 than mature NGF. The NGF precursor (proNGF) has much higher affinity for SORT1 than mature NGF (By similarity). Interacts with ADAM10 in a divalent cation-dependent manner (By similarity). Interacts with SORCS3 (By similarity).</text>
</comment>
<comment type="subcellular location">
    <subcellularLocation>
        <location evidence="1">Secreted</location>
    </subcellularLocation>
    <subcellularLocation>
        <location evidence="2">Endosome lumen</location>
    </subcellularLocation>
    <text evidence="2">ProNGF is endocytosed after binding to the cell surface receptor formed by SORT1 and NGFR.</text>
</comment>
<comment type="similarity">
    <text evidence="4">Belongs to the NGF-beta family.</text>
</comment>
<protein>
    <recommendedName>
        <fullName>Beta-nerve growth factor</fullName>
        <shortName>Beta-NGF</shortName>
    </recommendedName>
</protein>
<keyword id="KW-0165">Cleavage on pair of basic residues</keyword>
<keyword id="KW-1015">Disulfide bond</keyword>
<keyword id="KW-0967">Endosome</keyword>
<keyword id="KW-0325">Glycoprotein</keyword>
<keyword id="KW-0339">Growth factor</keyword>
<keyword id="KW-0481">Metalloenzyme inhibitor</keyword>
<keyword id="KW-0483">Metalloprotease inhibitor</keyword>
<keyword id="KW-0646">Protease inhibitor</keyword>
<keyword id="KW-1185">Reference proteome</keyword>
<keyword id="KW-0964">Secreted</keyword>
<keyword id="KW-0732">Signal</keyword>
<accession>P19093</accession>
<dbReference type="PIR" id="JL0097">
    <property type="entry name" value="JL0097"/>
</dbReference>
<dbReference type="SMR" id="P19093"/>
<dbReference type="FunCoup" id="P19093">
    <property type="interactions" value="1090"/>
</dbReference>
<dbReference type="STRING" id="10141.ENSCPOP00000020591"/>
<dbReference type="GlyCosmos" id="P19093">
    <property type="glycosylation" value="2 sites, No reported glycans"/>
</dbReference>
<dbReference type="eggNOG" id="ENOG502RYPU">
    <property type="taxonomic scope" value="Eukaryota"/>
</dbReference>
<dbReference type="InParanoid" id="P19093"/>
<dbReference type="Proteomes" id="UP000005447">
    <property type="component" value="Unassembled WGS sequence"/>
</dbReference>
<dbReference type="GO" id="GO:0030424">
    <property type="term" value="C:axon"/>
    <property type="evidence" value="ECO:0007669"/>
    <property type="project" value="TreeGrafter"/>
</dbReference>
<dbReference type="GO" id="GO:0030425">
    <property type="term" value="C:dendrite"/>
    <property type="evidence" value="ECO:0007669"/>
    <property type="project" value="TreeGrafter"/>
</dbReference>
<dbReference type="GO" id="GO:0005615">
    <property type="term" value="C:extracellular space"/>
    <property type="evidence" value="ECO:0007669"/>
    <property type="project" value="TreeGrafter"/>
</dbReference>
<dbReference type="GO" id="GO:0008021">
    <property type="term" value="C:synaptic vesicle"/>
    <property type="evidence" value="ECO:0007669"/>
    <property type="project" value="TreeGrafter"/>
</dbReference>
<dbReference type="GO" id="GO:0008083">
    <property type="term" value="F:growth factor activity"/>
    <property type="evidence" value="ECO:0007669"/>
    <property type="project" value="UniProtKB-KW"/>
</dbReference>
<dbReference type="GO" id="GO:0008191">
    <property type="term" value="F:metalloendopeptidase inhibitor activity"/>
    <property type="evidence" value="ECO:0000250"/>
    <property type="project" value="UniProtKB"/>
</dbReference>
<dbReference type="GO" id="GO:0005163">
    <property type="term" value="F:nerve growth factor receptor binding"/>
    <property type="evidence" value="ECO:0007669"/>
    <property type="project" value="TreeGrafter"/>
</dbReference>
<dbReference type="GO" id="GO:0007169">
    <property type="term" value="P:cell surface receptor protein tyrosine kinase signaling pathway"/>
    <property type="evidence" value="ECO:0007669"/>
    <property type="project" value="TreeGrafter"/>
</dbReference>
<dbReference type="GO" id="GO:0050804">
    <property type="term" value="P:modulation of chemical synaptic transmission"/>
    <property type="evidence" value="ECO:0007669"/>
    <property type="project" value="TreeGrafter"/>
</dbReference>
<dbReference type="GO" id="GO:0043524">
    <property type="term" value="P:negative regulation of neuron apoptotic process"/>
    <property type="evidence" value="ECO:0007669"/>
    <property type="project" value="TreeGrafter"/>
</dbReference>
<dbReference type="GO" id="GO:0021675">
    <property type="term" value="P:nerve development"/>
    <property type="evidence" value="ECO:0007669"/>
    <property type="project" value="TreeGrafter"/>
</dbReference>
<dbReference type="GO" id="GO:0038180">
    <property type="term" value="P:nerve growth factor signaling pathway"/>
    <property type="evidence" value="ECO:0007669"/>
    <property type="project" value="TreeGrafter"/>
</dbReference>
<dbReference type="GO" id="GO:0048812">
    <property type="term" value="P:neuron projection morphogenesis"/>
    <property type="evidence" value="ECO:0007669"/>
    <property type="project" value="TreeGrafter"/>
</dbReference>
<dbReference type="FunFam" id="2.10.90.10:FF:000002">
    <property type="entry name" value="Brain-derived neurotrophic factor"/>
    <property type="match status" value="1"/>
</dbReference>
<dbReference type="Gene3D" id="2.10.90.10">
    <property type="entry name" value="Cystine-knot cytokines"/>
    <property type="match status" value="1"/>
</dbReference>
<dbReference type="InterPro" id="IPR029034">
    <property type="entry name" value="Cystine-knot_cytokine"/>
</dbReference>
<dbReference type="InterPro" id="IPR020408">
    <property type="entry name" value="Nerve_growth_factor-like"/>
</dbReference>
<dbReference type="InterPro" id="IPR002072">
    <property type="entry name" value="Nerve_growth_factor-rel"/>
</dbReference>
<dbReference type="InterPro" id="IPR020425">
    <property type="entry name" value="Nerve_growth_factor_bsu"/>
</dbReference>
<dbReference type="InterPro" id="IPR020437">
    <property type="entry name" value="Nerve_growth_factor_bsu_mml"/>
</dbReference>
<dbReference type="InterPro" id="IPR019846">
    <property type="entry name" value="Nerve_growth_factor_CS"/>
</dbReference>
<dbReference type="PANTHER" id="PTHR11589:SF10">
    <property type="entry name" value="BETA-NERVE GROWTH FACTOR"/>
    <property type="match status" value="1"/>
</dbReference>
<dbReference type="PANTHER" id="PTHR11589">
    <property type="entry name" value="NERVE GROWTH FACTOR NGF -RELATED"/>
    <property type="match status" value="1"/>
</dbReference>
<dbReference type="Pfam" id="PF00243">
    <property type="entry name" value="NGF"/>
    <property type="match status" value="1"/>
</dbReference>
<dbReference type="PIRSF" id="PIRSF001789">
    <property type="entry name" value="NGF"/>
    <property type="match status" value="1"/>
</dbReference>
<dbReference type="PRINTS" id="PR01925">
    <property type="entry name" value="MAMLNGFBETA"/>
</dbReference>
<dbReference type="PRINTS" id="PR00268">
    <property type="entry name" value="NGF"/>
</dbReference>
<dbReference type="PRINTS" id="PR01913">
    <property type="entry name" value="NGFBETA"/>
</dbReference>
<dbReference type="SMART" id="SM00140">
    <property type="entry name" value="NGF"/>
    <property type="match status" value="1"/>
</dbReference>
<dbReference type="SUPFAM" id="SSF57501">
    <property type="entry name" value="Cystine-knot cytokines"/>
    <property type="match status" value="1"/>
</dbReference>
<dbReference type="PROSITE" id="PS00248">
    <property type="entry name" value="NGF_1"/>
    <property type="match status" value="1"/>
</dbReference>
<dbReference type="PROSITE" id="PS50270">
    <property type="entry name" value="NGF_2"/>
    <property type="match status" value="1"/>
</dbReference>
<evidence type="ECO:0000250" key="1">
    <source>
        <dbReference type="UniProtKB" id="P01138"/>
    </source>
</evidence>
<evidence type="ECO:0000250" key="2">
    <source>
        <dbReference type="UniProtKB" id="P01139"/>
    </source>
</evidence>
<evidence type="ECO:0000255" key="3"/>
<evidence type="ECO:0000305" key="4"/>
<feature type="signal peptide" evidence="3">
    <location>
        <begin position="1"/>
        <end position="18"/>
    </location>
</feature>
<feature type="propeptide" id="PRO_0000019597">
    <location>
        <begin position="19"/>
        <end position="121"/>
    </location>
</feature>
<feature type="chain" id="PRO_0000019598" description="Beta-nerve growth factor">
    <location>
        <begin position="122"/>
        <end position="241"/>
    </location>
</feature>
<feature type="glycosylation site" description="N-linked (GlcNAc...) asparagine" evidence="3">
    <location>
        <position position="69"/>
    </location>
</feature>
<feature type="glycosylation site" description="N-linked (GlcNAc...) asparagine" evidence="3">
    <location>
        <position position="114"/>
    </location>
</feature>
<feature type="disulfide bond" evidence="1">
    <location>
        <begin position="136"/>
        <end position="201"/>
    </location>
</feature>
<feature type="disulfide bond" evidence="1">
    <location>
        <begin position="179"/>
        <end position="229"/>
    </location>
</feature>
<feature type="disulfide bond" evidence="1">
    <location>
        <begin position="189"/>
        <end position="231"/>
    </location>
</feature>
<proteinExistence type="evidence at transcript level"/>
<reference key="1">
    <citation type="journal article" date="1989" name="J. Neurochem.">
        <title>Isolation and sequence of a cDNA clone of beta-nerve growth factor from the guinea pig prostate gland.</title>
        <authorList>
            <person name="Schwarz M.A."/>
            <person name="Fisher D."/>
            <person name="Bradshaw R.A."/>
            <person name="Isackson P.J."/>
        </authorList>
    </citation>
    <scope>NUCLEOTIDE SEQUENCE [MRNA]</scope>
    <source>
        <tissue>Prostate</tissue>
    </source>
</reference>
<sequence length="241" mass="26822">MSMLFYTLITVFLIGIQAEPYSDSNVLSGDTIPQAHWTKLQHSLDTALRRAHSAPAAPIAARVAGQTLNITVDPRLFKKRRLHSPRVLFSTQPPPLSTDAQDLDFEVDGAASVNRTHRSKRSSTHPVFHMGEFSVCDSVSVWVADKTTATDIKGKEVTVLAEVNVNNNVFKQYFFETKCRDPSPVDSGCRGIDSKHWNSYCTTTHTFVKALTTANKQAAWRFIRIDTACVCVLNRKAARRG</sequence>
<gene>
    <name type="primary">NGF</name>
    <name type="synonym">NGFB</name>
</gene>